<accession>Q2J3A1</accession>
<proteinExistence type="inferred from homology"/>
<protein>
    <recommendedName>
        <fullName evidence="1">3-isopropylmalate dehydratase large subunit</fullName>
        <ecNumber evidence="1">4.2.1.33</ecNumber>
    </recommendedName>
    <alternativeName>
        <fullName evidence="1">Alpha-IPM isomerase</fullName>
        <shortName evidence="1">IPMI</shortName>
    </alternativeName>
    <alternativeName>
        <fullName evidence="1">Isopropylmalate isomerase</fullName>
    </alternativeName>
</protein>
<keyword id="KW-0004">4Fe-4S</keyword>
<keyword id="KW-0028">Amino-acid biosynthesis</keyword>
<keyword id="KW-0100">Branched-chain amino acid biosynthesis</keyword>
<keyword id="KW-0408">Iron</keyword>
<keyword id="KW-0411">Iron-sulfur</keyword>
<keyword id="KW-0432">Leucine biosynthesis</keyword>
<keyword id="KW-0456">Lyase</keyword>
<keyword id="KW-0479">Metal-binding</keyword>
<keyword id="KW-1185">Reference proteome</keyword>
<name>LEUC_RHOP2</name>
<reference key="1">
    <citation type="submission" date="2006-01" db="EMBL/GenBank/DDBJ databases">
        <title>Complete sequence of Rhodopseudomonas palustris HaA2.</title>
        <authorList>
            <consortium name="US DOE Joint Genome Institute"/>
            <person name="Copeland A."/>
            <person name="Lucas S."/>
            <person name="Lapidus A."/>
            <person name="Barry K."/>
            <person name="Detter J.C."/>
            <person name="Glavina T."/>
            <person name="Hammon N."/>
            <person name="Israni S."/>
            <person name="Pitluck S."/>
            <person name="Chain P."/>
            <person name="Malfatti S."/>
            <person name="Shin M."/>
            <person name="Vergez L."/>
            <person name="Schmutz J."/>
            <person name="Larimer F."/>
            <person name="Land M."/>
            <person name="Hauser L."/>
            <person name="Pelletier D.A."/>
            <person name="Kyrpides N."/>
            <person name="Anderson I."/>
            <person name="Oda Y."/>
            <person name="Harwood C.S."/>
            <person name="Richardson P."/>
        </authorList>
    </citation>
    <scope>NUCLEOTIDE SEQUENCE [LARGE SCALE GENOMIC DNA]</scope>
    <source>
        <strain>HaA2</strain>
    </source>
</reference>
<dbReference type="EC" id="4.2.1.33" evidence="1"/>
<dbReference type="EMBL" id="CP000250">
    <property type="protein sequence ID" value="ABD05059.1"/>
    <property type="molecule type" value="Genomic_DNA"/>
</dbReference>
<dbReference type="RefSeq" id="WP_011439249.1">
    <property type="nucleotide sequence ID" value="NC_007778.1"/>
</dbReference>
<dbReference type="SMR" id="Q2J3A1"/>
<dbReference type="STRING" id="316058.RPB_0348"/>
<dbReference type="KEGG" id="rpb:RPB_0348"/>
<dbReference type="eggNOG" id="COG0065">
    <property type="taxonomic scope" value="Bacteria"/>
</dbReference>
<dbReference type="HOGENOM" id="CLU_006714_3_4_5"/>
<dbReference type="OrthoDB" id="9802769at2"/>
<dbReference type="UniPathway" id="UPA00048">
    <property type="reaction ID" value="UER00071"/>
</dbReference>
<dbReference type="Proteomes" id="UP000008809">
    <property type="component" value="Chromosome"/>
</dbReference>
<dbReference type="GO" id="GO:0003861">
    <property type="term" value="F:3-isopropylmalate dehydratase activity"/>
    <property type="evidence" value="ECO:0007669"/>
    <property type="project" value="UniProtKB-UniRule"/>
</dbReference>
<dbReference type="GO" id="GO:0051539">
    <property type="term" value="F:4 iron, 4 sulfur cluster binding"/>
    <property type="evidence" value="ECO:0007669"/>
    <property type="project" value="UniProtKB-KW"/>
</dbReference>
<dbReference type="GO" id="GO:0046872">
    <property type="term" value="F:metal ion binding"/>
    <property type="evidence" value="ECO:0007669"/>
    <property type="project" value="UniProtKB-KW"/>
</dbReference>
<dbReference type="GO" id="GO:0009098">
    <property type="term" value="P:L-leucine biosynthetic process"/>
    <property type="evidence" value="ECO:0007669"/>
    <property type="project" value="UniProtKB-UniRule"/>
</dbReference>
<dbReference type="CDD" id="cd01583">
    <property type="entry name" value="IPMI"/>
    <property type="match status" value="1"/>
</dbReference>
<dbReference type="FunFam" id="3.30.499.10:FF:000007">
    <property type="entry name" value="3-isopropylmalate dehydratase large subunit"/>
    <property type="match status" value="1"/>
</dbReference>
<dbReference type="Gene3D" id="3.30.499.10">
    <property type="entry name" value="Aconitase, domain 3"/>
    <property type="match status" value="2"/>
</dbReference>
<dbReference type="HAMAP" id="MF_01026">
    <property type="entry name" value="LeuC_type1"/>
    <property type="match status" value="1"/>
</dbReference>
<dbReference type="InterPro" id="IPR004430">
    <property type="entry name" value="3-IsopropMal_deHydase_lsu"/>
</dbReference>
<dbReference type="InterPro" id="IPR015931">
    <property type="entry name" value="Acnase/IPM_dHydase_lsu_aba_1/3"/>
</dbReference>
<dbReference type="InterPro" id="IPR001030">
    <property type="entry name" value="Acoase/IPM_deHydtase_lsu_aba"/>
</dbReference>
<dbReference type="InterPro" id="IPR018136">
    <property type="entry name" value="Aconitase_4Fe-4S_BS"/>
</dbReference>
<dbReference type="InterPro" id="IPR036008">
    <property type="entry name" value="Aconitase_4Fe-4S_dom"/>
</dbReference>
<dbReference type="InterPro" id="IPR050067">
    <property type="entry name" value="IPM_dehydratase_rel_enz"/>
</dbReference>
<dbReference type="InterPro" id="IPR033941">
    <property type="entry name" value="IPMI_cat"/>
</dbReference>
<dbReference type="NCBIfam" id="TIGR00170">
    <property type="entry name" value="leuC"/>
    <property type="match status" value="1"/>
</dbReference>
<dbReference type="NCBIfam" id="NF004016">
    <property type="entry name" value="PRK05478.1"/>
    <property type="match status" value="1"/>
</dbReference>
<dbReference type="NCBIfam" id="NF009116">
    <property type="entry name" value="PRK12466.1"/>
    <property type="match status" value="1"/>
</dbReference>
<dbReference type="PANTHER" id="PTHR43822:SF9">
    <property type="entry name" value="3-ISOPROPYLMALATE DEHYDRATASE"/>
    <property type="match status" value="1"/>
</dbReference>
<dbReference type="PANTHER" id="PTHR43822">
    <property type="entry name" value="HOMOACONITASE, MITOCHONDRIAL-RELATED"/>
    <property type="match status" value="1"/>
</dbReference>
<dbReference type="Pfam" id="PF00330">
    <property type="entry name" value="Aconitase"/>
    <property type="match status" value="1"/>
</dbReference>
<dbReference type="PRINTS" id="PR00415">
    <property type="entry name" value="ACONITASE"/>
</dbReference>
<dbReference type="SUPFAM" id="SSF53732">
    <property type="entry name" value="Aconitase iron-sulfur domain"/>
    <property type="match status" value="1"/>
</dbReference>
<dbReference type="PROSITE" id="PS00450">
    <property type="entry name" value="ACONITASE_1"/>
    <property type="match status" value="1"/>
</dbReference>
<dbReference type="PROSITE" id="PS01244">
    <property type="entry name" value="ACONITASE_2"/>
    <property type="match status" value="1"/>
</dbReference>
<comment type="function">
    <text evidence="1">Catalyzes the isomerization between 2-isopropylmalate and 3-isopropylmalate, via the formation of 2-isopropylmaleate.</text>
</comment>
<comment type="catalytic activity">
    <reaction evidence="1">
        <text>(2R,3S)-3-isopropylmalate = (2S)-2-isopropylmalate</text>
        <dbReference type="Rhea" id="RHEA:32287"/>
        <dbReference type="ChEBI" id="CHEBI:1178"/>
        <dbReference type="ChEBI" id="CHEBI:35121"/>
        <dbReference type="EC" id="4.2.1.33"/>
    </reaction>
</comment>
<comment type="cofactor">
    <cofactor evidence="1">
        <name>[4Fe-4S] cluster</name>
        <dbReference type="ChEBI" id="CHEBI:49883"/>
    </cofactor>
    <text evidence="1">Binds 1 [4Fe-4S] cluster per subunit.</text>
</comment>
<comment type="pathway">
    <text evidence="1">Amino-acid biosynthesis; L-leucine biosynthesis; L-leucine from 3-methyl-2-oxobutanoate: step 2/4.</text>
</comment>
<comment type="subunit">
    <text evidence="1">Heterodimer of LeuC and LeuD.</text>
</comment>
<comment type="similarity">
    <text evidence="1">Belongs to the aconitase/IPM isomerase family. LeuC type 1 subfamily.</text>
</comment>
<organism>
    <name type="scientific">Rhodopseudomonas palustris (strain HaA2)</name>
    <dbReference type="NCBI Taxonomy" id="316058"/>
    <lineage>
        <taxon>Bacteria</taxon>
        <taxon>Pseudomonadati</taxon>
        <taxon>Pseudomonadota</taxon>
        <taxon>Alphaproteobacteria</taxon>
        <taxon>Hyphomicrobiales</taxon>
        <taxon>Nitrobacteraceae</taxon>
        <taxon>Rhodopseudomonas</taxon>
    </lineage>
</organism>
<sequence>MSAAKPTTLYDKIWNDHLVHEAEDGTCLLYIDRHLVHEVTSPQAFEGLRTAGRKVHAPEKTLAVVDHNVPTTDRSKPNPDPESAEQIAALAENARDFGVTYYNEFDKRQGVVHVIGPEQGFTLPGTTIVCGDSHTSTHGAFGALAHGIGTSEVEHVLATQTLIQKKAKNMRVTVDGDLPDGVTAKDIILAIIGEIGTAGGTGYVLEYAGDAIRALSMEGRMTVCNMSIEGGARAGLIAPDEKAYAYLKGRPMAPTGAHWDAAMRYWDTLRSDEGAHFDHELRLDAAALPPIVTWGTSPEDVISVTGKVPNPADIADEAKRLSKERALAYMGLTPGTKITDIKIDRMFIGSCTNGRIEDLRAAAKVAEGKTVNANVNAIIVPGSGLVKEQAEAEGLDKIFVKAGFEWREPGCSMCLAMNPDKLAPEERCASTSNRNFEGRQGFKGRTHLVSPAMAAAAAIAGHFVDIRDWR</sequence>
<feature type="chain" id="PRO_0000319834" description="3-isopropylmalate dehydratase large subunit">
    <location>
        <begin position="1"/>
        <end position="470"/>
    </location>
</feature>
<feature type="binding site" evidence="1">
    <location>
        <position position="351"/>
    </location>
    <ligand>
        <name>[4Fe-4S] cluster</name>
        <dbReference type="ChEBI" id="CHEBI:49883"/>
    </ligand>
</feature>
<feature type="binding site" evidence="1">
    <location>
        <position position="411"/>
    </location>
    <ligand>
        <name>[4Fe-4S] cluster</name>
        <dbReference type="ChEBI" id="CHEBI:49883"/>
    </ligand>
</feature>
<feature type="binding site" evidence="1">
    <location>
        <position position="414"/>
    </location>
    <ligand>
        <name>[4Fe-4S] cluster</name>
        <dbReference type="ChEBI" id="CHEBI:49883"/>
    </ligand>
</feature>
<gene>
    <name evidence="1" type="primary">leuC</name>
    <name type="ordered locus">RPB_0348</name>
</gene>
<evidence type="ECO:0000255" key="1">
    <source>
        <dbReference type="HAMAP-Rule" id="MF_01026"/>
    </source>
</evidence>